<comment type="function">
    <text evidence="1">Forms part of the ribosomal stalk, playing a central role in the interaction of the ribosome with GTP-bound translation factors.</text>
</comment>
<comment type="subunit">
    <text evidence="1">Part of the ribosomal stalk of the 50S ribosomal subunit. The N-terminus interacts with L11 and the large rRNA to form the base of the stalk. The C-terminus forms an elongated spine to which L12 dimers bind in a sequential fashion forming a multimeric L10(L12)X complex.</text>
</comment>
<comment type="similarity">
    <text evidence="1">Belongs to the universal ribosomal protein uL10 family.</text>
</comment>
<name>RL10_CHLTE</name>
<feature type="chain" id="PRO_0000154613" description="Large ribosomal subunit protein uL10">
    <location>
        <begin position="1"/>
        <end position="173"/>
    </location>
</feature>
<accession>Q8KG17</accession>
<sequence length="173" mass="19283">MMKRDTKEQIAQEIAEKFQKSQGFYFTEFQGLDVQKMSQLRLEFRKAGIEYRVVKNTLIKKALKDAADVDKLAAGLKNTTAVAFAYDDPIAPAKIIKKFSKDNEALKFKMASIDGQVFGSDSLPQLSEMLSKTENIGRLAGLLNNMVASVPMVMNAVMRNLVSVIDQVGKLEK</sequence>
<proteinExistence type="inferred from homology"/>
<dbReference type="EMBL" id="AE006470">
    <property type="protein sequence ID" value="AAM71401.1"/>
    <property type="molecule type" value="Genomic_DNA"/>
</dbReference>
<dbReference type="RefSeq" id="NP_661059.2">
    <property type="nucleotide sequence ID" value="NC_002932.3"/>
</dbReference>
<dbReference type="SMR" id="Q8KG17"/>
<dbReference type="STRING" id="194439.CT0153"/>
<dbReference type="EnsemblBacteria" id="AAM71401">
    <property type="protein sequence ID" value="AAM71401"/>
    <property type="gene ID" value="CT0153"/>
</dbReference>
<dbReference type="KEGG" id="cte:CT0153"/>
<dbReference type="PATRIC" id="fig|194439.7.peg.150"/>
<dbReference type="eggNOG" id="COG0244">
    <property type="taxonomic scope" value="Bacteria"/>
</dbReference>
<dbReference type="HOGENOM" id="CLU_092227_3_0_10"/>
<dbReference type="OrthoDB" id="1523686at2"/>
<dbReference type="Proteomes" id="UP000001007">
    <property type="component" value="Chromosome"/>
</dbReference>
<dbReference type="GO" id="GO:0015934">
    <property type="term" value="C:large ribosomal subunit"/>
    <property type="evidence" value="ECO:0007669"/>
    <property type="project" value="InterPro"/>
</dbReference>
<dbReference type="GO" id="GO:0070180">
    <property type="term" value="F:large ribosomal subunit rRNA binding"/>
    <property type="evidence" value="ECO:0007669"/>
    <property type="project" value="UniProtKB-UniRule"/>
</dbReference>
<dbReference type="GO" id="GO:0003735">
    <property type="term" value="F:structural constituent of ribosome"/>
    <property type="evidence" value="ECO:0007669"/>
    <property type="project" value="InterPro"/>
</dbReference>
<dbReference type="GO" id="GO:0006412">
    <property type="term" value="P:translation"/>
    <property type="evidence" value="ECO:0007669"/>
    <property type="project" value="UniProtKB-UniRule"/>
</dbReference>
<dbReference type="CDD" id="cd05797">
    <property type="entry name" value="Ribosomal_L10"/>
    <property type="match status" value="1"/>
</dbReference>
<dbReference type="Gene3D" id="3.30.70.1730">
    <property type="match status" value="1"/>
</dbReference>
<dbReference type="Gene3D" id="6.10.250.290">
    <property type="match status" value="1"/>
</dbReference>
<dbReference type="HAMAP" id="MF_00362">
    <property type="entry name" value="Ribosomal_uL10"/>
    <property type="match status" value="1"/>
</dbReference>
<dbReference type="InterPro" id="IPR001790">
    <property type="entry name" value="Ribosomal_uL10"/>
</dbReference>
<dbReference type="InterPro" id="IPR043141">
    <property type="entry name" value="Ribosomal_uL10-like_sf"/>
</dbReference>
<dbReference type="InterPro" id="IPR022973">
    <property type="entry name" value="Ribosomal_uL10_bac"/>
</dbReference>
<dbReference type="InterPro" id="IPR047865">
    <property type="entry name" value="Ribosomal_uL10_bac_type"/>
</dbReference>
<dbReference type="InterPro" id="IPR002363">
    <property type="entry name" value="Ribosomal_uL10_CS_bac"/>
</dbReference>
<dbReference type="NCBIfam" id="NF000955">
    <property type="entry name" value="PRK00099.1-1"/>
    <property type="match status" value="1"/>
</dbReference>
<dbReference type="PANTHER" id="PTHR11560">
    <property type="entry name" value="39S RIBOSOMAL PROTEIN L10, MITOCHONDRIAL"/>
    <property type="match status" value="1"/>
</dbReference>
<dbReference type="Pfam" id="PF00466">
    <property type="entry name" value="Ribosomal_L10"/>
    <property type="match status" value="1"/>
</dbReference>
<dbReference type="SUPFAM" id="SSF160369">
    <property type="entry name" value="Ribosomal protein L10-like"/>
    <property type="match status" value="1"/>
</dbReference>
<dbReference type="PROSITE" id="PS01109">
    <property type="entry name" value="RIBOSOMAL_L10"/>
    <property type="match status" value="1"/>
</dbReference>
<reference key="1">
    <citation type="journal article" date="2002" name="Proc. Natl. Acad. Sci. U.S.A.">
        <title>The complete genome sequence of Chlorobium tepidum TLS, a photosynthetic, anaerobic, green-sulfur bacterium.</title>
        <authorList>
            <person name="Eisen J.A."/>
            <person name="Nelson K.E."/>
            <person name="Paulsen I.T."/>
            <person name="Heidelberg J.F."/>
            <person name="Wu M."/>
            <person name="Dodson R.J."/>
            <person name="DeBoy R.T."/>
            <person name="Gwinn M.L."/>
            <person name="Nelson W.C."/>
            <person name="Haft D.H."/>
            <person name="Hickey E.K."/>
            <person name="Peterson J.D."/>
            <person name="Durkin A.S."/>
            <person name="Kolonay J.F."/>
            <person name="Yang F."/>
            <person name="Holt I.E."/>
            <person name="Umayam L.A."/>
            <person name="Mason T.M."/>
            <person name="Brenner M."/>
            <person name="Shea T.P."/>
            <person name="Parksey D.S."/>
            <person name="Nierman W.C."/>
            <person name="Feldblyum T.V."/>
            <person name="Hansen C.L."/>
            <person name="Craven M.B."/>
            <person name="Radune D."/>
            <person name="Vamathevan J.J."/>
            <person name="Khouri H.M."/>
            <person name="White O."/>
            <person name="Gruber T.M."/>
            <person name="Ketchum K.A."/>
            <person name="Venter J.C."/>
            <person name="Tettelin H."/>
            <person name="Bryant D.A."/>
            <person name="Fraser C.M."/>
        </authorList>
    </citation>
    <scope>NUCLEOTIDE SEQUENCE [LARGE SCALE GENOMIC DNA]</scope>
    <source>
        <strain>ATCC 49652 / DSM 12025 / NBRC 103806 / TLS</strain>
    </source>
</reference>
<organism>
    <name type="scientific">Chlorobaculum tepidum (strain ATCC 49652 / DSM 12025 / NBRC 103806 / TLS)</name>
    <name type="common">Chlorobium tepidum</name>
    <dbReference type="NCBI Taxonomy" id="194439"/>
    <lineage>
        <taxon>Bacteria</taxon>
        <taxon>Pseudomonadati</taxon>
        <taxon>Chlorobiota</taxon>
        <taxon>Chlorobiia</taxon>
        <taxon>Chlorobiales</taxon>
        <taxon>Chlorobiaceae</taxon>
        <taxon>Chlorobaculum</taxon>
    </lineage>
</organism>
<protein>
    <recommendedName>
        <fullName evidence="1">Large ribosomal subunit protein uL10</fullName>
    </recommendedName>
    <alternativeName>
        <fullName evidence="2">50S ribosomal protein L10</fullName>
    </alternativeName>
</protein>
<keyword id="KW-1185">Reference proteome</keyword>
<keyword id="KW-0687">Ribonucleoprotein</keyword>
<keyword id="KW-0689">Ribosomal protein</keyword>
<keyword id="KW-0694">RNA-binding</keyword>
<keyword id="KW-0699">rRNA-binding</keyword>
<evidence type="ECO:0000255" key="1">
    <source>
        <dbReference type="HAMAP-Rule" id="MF_00362"/>
    </source>
</evidence>
<evidence type="ECO:0000305" key="2"/>
<gene>
    <name evidence="1" type="primary">rplJ</name>
    <name type="ordered locus">CT0153</name>
</gene>